<protein>
    <recommendedName>
        <fullName evidence="7">Cysteine/Cysteine sulfinic acid decarboxylase</fullName>
        <ecNumber evidence="1 3">4.1.1.-</ecNumber>
        <ecNumber evidence="2 4">4.1.1.29</ecNumber>
    </recommendedName>
    <alternativeName>
        <fullName evidence="5">Cysteine decarboxylase</fullName>
    </alternativeName>
    <alternativeName>
        <fullName evidence="6">L-cysteine sulfinate decarboxylase</fullName>
        <shortName evidence="6">CSD</shortName>
    </alternativeName>
    <alternativeName>
        <fullName evidence="7">Sulfinoalanine decarboxylase</fullName>
    </alternativeName>
</protein>
<reference key="1">
    <citation type="journal article" date="2007" name="Biochem. Biophys. Res. Commun.">
        <title>Molecular cloning and functional characterization of a novel decarboxylase from uncultured microorganisms.</title>
        <authorList>
            <person name="Jiang C."/>
            <person name="Wu B."/>
        </authorList>
    </citation>
    <scope>NUCLEOTIDE SEQUENCE [GENOMIC DNA]</scope>
    <scope>FUNCTION</scope>
    <scope>CATALYTIC ACTIVITY</scope>
</reference>
<reference key="2">
    <citation type="journal article" date="2009" name="Enzyme Microb. Technol.">
        <title>Biochemical characterization of a metagenome-derived decarboxylase.</title>
        <authorList>
            <person name="Jiang C."/>
            <person name="Shen P."/>
            <person name="Yan B."/>
            <person name="Wu B."/>
        </authorList>
    </citation>
    <scope>FUNCTION</scope>
    <scope>CATALYTIC ACTIVITY</scope>
    <scope>ACTIVITY REGULATION</scope>
    <scope>BIOPHYSICOCHEMICAL PROPERTIES</scope>
    <scope>MUTAGENESIS OF HIS-30 AND SER-113</scope>
</reference>
<reference key="3">
    <citation type="journal article" date="2017" name="Acta Microbiol. Sin.">
        <title>Protein engineering by random mutagenesis and analysis of a metagenome-derived cysteine sulfinate decarboxylase.</title>
        <authorList>
            <person name="Deng J."/>
            <person name="Wu Q."/>
            <person name="Gao H."/>
            <person name="Xu Y."/>
            <person name="Ou Q."/>
            <person name="Wu B."/>
            <person name="Jiang C."/>
        </authorList>
    </citation>
    <scope>FUNCTION</scope>
    <scope>CATALYTIC ACTIVITY</scope>
    <scope>BIOPHYSICOCHEMICAL PROPERTIES</scope>
</reference>
<reference key="4">
    <citation type="journal article" date="2018" name="Food Technol. Biotechnol.">
        <title>Molecular characterization and directed evolution of a metagenome-derived L-cysteine sulfinate decarboxylase.</title>
        <authorList>
            <person name="Deng J."/>
            <person name="Wu Q."/>
            <person name="Gao H."/>
            <person name="Ou Q."/>
            <person name="Wu B."/>
            <person name="Yan B."/>
            <person name="Jiang C."/>
        </authorList>
    </citation>
    <scope>FUNCTION</scope>
    <scope>CATALYTIC ACTIVITY</scope>
</reference>
<accession>A0A2I9</accession>
<feature type="chain" id="PRO_0000445604" description="Cysteine/Cysteine sulfinic acid decarboxylase">
    <location>
        <begin position="1"/>
        <end position="359"/>
    </location>
</feature>
<feature type="mutagenesis site" description="Loss of decarboxylase activity." evidence="3">
    <original>H</original>
    <variation>N</variation>
    <location>
        <position position="30"/>
    </location>
</feature>
<feature type="mutagenesis site" description="Loss of 80% of decarboxylase activity." evidence="3">
    <original>S</original>
    <variation>R</variation>
    <location>
        <position position="113"/>
    </location>
</feature>
<name>CCSD_UNKP</name>
<sequence>MITPLTLATLSKNPILVDFFDPEDGRWNSHVDLGLWSDLYLIAPATANTIGKMAAGIADNLLLTSYLSARCPVFIAPAMDVDMLMHPATQRNLGILKSSGNHIIEPGSGELASGLTGKGRMAEPEEIVREVISFFSKKKITEKPLNGRRVFINAGPTIEPIDPVRFISNYSSGRMGIALADAAAAMGAEVTLVLGPVTLRPSSQDINVIDVRSAAEMKEASVEAFRECDIAILAAAVADFTPLTTSDKKIKRGSGEMVINLRPTEDIAAELGKMKKKNQLLVGFALETDDEITNASSKLKRKNLDMIVLNSLKDPGAGFGHETNRITIIDKSNNIDKFELKTKGEVAADIIRKILTLVH</sequence>
<organism>
    <name type="scientific">Unknown prokaryotic organism</name>
    <dbReference type="NCBI Taxonomy" id="2725"/>
    <lineage>
        <taxon>Bacteria</taxon>
        <taxon>environmental samples</taxon>
    </lineage>
</organism>
<evidence type="ECO:0000269" key="1">
    <source>
    </source>
</evidence>
<evidence type="ECO:0000269" key="2">
    <source>
    </source>
</evidence>
<evidence type="ECO:0000269" key="3">
    <source ref="2"/>
</evidence>
<evidence type="ECO:0000269" key="4">
    <source ref="3"/>
</evidence>
<evidence type="ECO:0000303" key="5">
    <source>
    </source>
</evidence>
<evidence type="ECO:0000303" key="6">
    <source>
    </source>
</evidence>
<evidence type="ECO:0000305" key="7"/>
<dbReference type="EC" id="4.1.1.-" evidence="1 3"/>
<dbReference type="EC" id="4.1.1.29" evidence="2 4"/>
<dbReference type="EMBL" id="EF015465">
    <property type="protein sequence ID" value="ABJ80896.1"/>
    <property type="molecule type" value="Genomic_DNA"/>
</dbReference>
<dbReference type="SMR" id="A0A2I9"/>
<dbReference type="BRENDA" id="4.1.1.29">
    <property type="organism ID" value="12464"/>
</dbReference>
<dbReference type="GO" id="GO:0071513">
    <property type="term" value="C:phosphopantothenoylcysteine decarboxylase complex"/>
    <property type="evidence" value="ECO:0007669"/>
    <property type="project" value="TreeGrafter"/>
</dbReference>
<dbReference type="GO" id="GO:0010181">
    <property type="term" value="F:FMN binding"/>
    <property type="evidence" value="ECO:0007669"/>
    <property type="project" value="UniProtKB-UniRule"/>
</dbReference>
<dbReference type="GO" id="GO:0004632">
    <property type="term" value="F:phosphopantothenate--cysteine ligase activity"/>
    <property type="evidence" value="ECO:0007669"/>
    <property type="project" value="UniProtKB-UniRule"/>
</dbReference>
<dbReference type="GO" id="GO:0004633">
    <property type="term" value="F:phosphopantothenoylcysteine decarboxylase activity"/>
    <property type="evidence" value="ECO:0007669"/>
    <property type="project" value="UniProtKB-UniRule"/>
</dbReference>
<dbReference type="GO" id="GO:0004782">
    <property type="term" value="F:sulfinoalanine decarboxylase activity"/>
    <property type="evidence" value="ECO:0007669"/>
    <property type="project" value="UniProtKB-EC"/>
</dbReference>
<dbReference type="GO" id="GO:0015937">
    <property type="term" value="P:coenzyme A biosynthetic process"/>
    <property type="evidence" value="ECO:0007669"/>
    <property type="project" value="UniProtKB-UniRule"/>
</dbReference>
<dbReference type="GO" id="GO:0015941">
    <property type="term" value="P:pantothenate catabolic process"/>
    <property type="evidence" value="ECO:0007669"/>
    <property type="project" value="InterPro"/>
</dbReference>
<dbReference type="Gene3D" id="3.40.50.10300">
    <property type="entry name" value="CoaB-like"/>
    <property type="match status" value="1"/>
</dbReference>
<dbReference type="Gene3D" id="3.40.50.1950">
    <property type="entry name" value="Flavin prenyltransferase-like"/>
    <property type="match status" value="1"/>
</dbReference>
<dbReference type="HAMAP" id="MF_02225">
    <property type="entry name" value="CoaBC"/>
    <property type="match status" value="1"/>
</dbReference>
<dbReference type="InterPro" id="IPR035929">
    <property type="entry name" value="CoaB-like_sf"/>
</dbReference>
<dbReference type="InterPro" id="IPR005252">
    <property type="entry name" value="CoaBC"/>
</dbReference>
<dbReference type="InterPro" id="IPR007085">
    <property type="entry name" value="DNA/pantothenate-metab_flavo_C"/>
</dbReference>
<dbReference type="InterPro" id="IPR036551">
    <property type="entry name" value="Flavin_trans-like"/>
</dbReference>
<dbReference type="InterPro" id="IPR003382">
    <property type="entry name" value="Flavoprotein"/>
</dbReference>
<dbReference type="NCBIfam" id="TIGR00521">
    <property type="entry name" value="coaBC_dfp"/>
    <property type="match status" value="1"/>
</dbReference>
<dbReference type="PANTHER" id="PTHR14359">
    <property type="entry name" value="HOMO-OLIGOMERIC FLAVIN CONTAINING CYS DECARBOXYLASE FAMILY"/>
    <property type="match status" value="1"/>
</dbReference>
<dbReference type="PANTHER" id="PTHR14359:SF6">
    <property type="entry name" value="PHOSPHOPANTOTHENOYLCYSTEINE DECARBOXYLASE"/>
    <property type="match status" value="1"/>
</dbReference>
<dbReference type="Pfam" id="PF04127">
    <property type="entry name" value="DFP"/>
    <property type="match status" value="1"/>
</dbReference>
<dbReference type="Pfam" id="PF02441">
    <property type="entry name" value="Flavoprotein"/>
    <property type="match status" value="1"/>
</dbReference>
<dbReference type="SUPFAM" id="SSF102645">
    <property type="entry name" value="CoaB-like"/>
    <property type="match status" value="1"/>
</dbReference>
<dbReference type="SUPFAM" id="SSF52507">
    <property type="entry name" value="Homo-oligomeric flavin-containing Cys decarboxylases, HFCD"/>
    <property type="match status" value="1"/>
</dbReference>
<proteinExistence type="evidence at protein level"/>
<keyword id="KW-0210">Decarboxylase</keyword>
<keyword id="KW-0456">Lyase</keyword>
<comment type="function">
    <text evidence="1 2 3 4">Catalyzes the decarboxylation of L-cysteine to cysteamine and of 3-sulfino-L-alanine (cysteine sulfinic acid) to hypotaurine (PubMed:17420004, PubMed:29796005, Ref.2, Ref.3). Also catalyzes the decarboxylation of various amino acids such as L-lysine, L-glutamate, L-asparaginate and L-proline (Ref.2). In vitro, shows highest activity with L-cysteine as substrate (Ref.2).</text>
</comment>
<comment type="catalytic activity">
    <reaction evidence="1 3">
        <text>L-cysteine + H(+) = cysteamine + CO2</text>
        <dbReference type="Rhea" id="RHEA:27746"/>
        <dbReference type="ChEBI" id="CHEBI:15378"/>
        <dbReference type="ChEBI" id="CHEBI:16526"/>
        <dbReference type="ChEBI" id="CHEBI:35235"/>
        <dbReference type="ChEBI" id="CHEBI:58029"/>
    </reaction>
</comment>
<comment type="catalytic activity">
    <reaction evidence="2 4">
        <text>3-sulfino-L-alanine + H(+) = hypotaurine + CO2</text>
        <dbReference type="Rhea" id="RHEA:16877"/>
        <dbReference type="ChEBI" id="CHEBI:15378"/>
        <dbReference type="ChEBI" id="CHEBI:16526"/>
        <dbReference type="ChEBI" id="CHEBI:57853"/>
        <dbReference type="ChEBI" id="CHEBI:61085"/>
        <dbReference type="EC" id="4.1.1.29"/>
    </reaction>
</comment>
<comment type="activity regulation">
    <text evidence="3">Slightly stimulated in the presence of 1 mM Mg(2+).</text>
</comment>
<comment type="biophysicochemical properties">
    <kinetics>
        <KM evidence="3">0.59 mM for L-cysteine</KM>
        <KM evidence="4">1.557 mM for L-cysteine sulfinic acid</KM>
        <text evidence="3 4">kcat is 4.57 min(-1) with L-cysteine as substrate (Ref.2). kcat is 45.8 min(-1) with L-cysteine sulfinic acid as substrate (Ref.3).</text>
    </kinetics>
    <phDependence>
        <text evidence="3">Optimum pH is 7.0.</text>
    </phDependence>
    <temperatureDependence>
        <text evidence="3">Optimum temperature is 35 degrees Celsius.</text>
    </temperatureDependence>
</comment>
<comment type="similarity">
    <text evidence="7">In the N-terminal section; belongs to the HFCD (homo-oligomeric flavin containing Cys decarboxylase) superfamily.</text>
</comment>
<comment type="similarity">
    <text evidence="7">In the C-terminal section; belongs to the PPC synthetase family.</text>
</comment>
<gene>
    <name evidence="5" type="primary">undec1A</name>
</gene>